<gene>
    <name type="ordered locus">Psyc_0800</name>
</gene>
<organism>
    <name type="scientific">Psychrobacter arcticus (strain DSM 17307 / VKM B-2377 / 273-4)</name>
    <dbReference type="NCBI Taxonomy" id="259536"/>
    <lineage>
        <taxon>Bacteria</taxon>
        <taxon>Pseudomonadati</taxon>
        <taxon>Pseudomonadota</taxon>
        <taxon>Gammaproteobacteria</taxon>
        <taxon>Moraxellales</taxon>
        <taxon>Moraxellaceae</taxon>
        <taxon>Psychrobacter</taxon>
    </lineage>
</organism>
<keyword id="KW-1185">Reference proteome</keyword>
<sequence length="107" mass="12443">MHCDIYKFLKHDDMYIYIARPDYPNDTDEIKDWLGVLPKDFRAGLGRSKFVMHLDLATTPALARVDKEEVLAKLASQGYFVQLPPQDVMRRQAELHARESQDSIYNT</sequence>
<name>Y800_PSYA2</name>
<reference key="1">
    <citation type="journal article" date="2010" name="Appl. Environ. Microbiol.">
        <title>The genome sequence of Psychrobacter arcticus 273-4, a psychroactive Siberian permafrost bacterium, reveals mechanisms for adaptation to low-temperature growth.</title>
        <authorList>
            <person name="Ayala-del-Rio H.L."/>
            <person name="Chain P.S."/>
            <person name="Grzymski J.J."/>
            <person name="Ponder M.A."/>
            <person name="Ivanova N."/>
            <person name="Bergholz P.W."/>
            <person name="Di Bartolo G."/>
            <person name="Hauser L."/>
            <person name="Land M."/>
            <person name="Bakermans C."/>
            <person name="Rodrigues D."/>
            <person name="Klappenbach J."/>
            <person name="Zarka D."/>
            <person name="Larimer F."/>
            <person name="Richardson P."/>
            <person name="Murray A."/>
            <person name="Thomashow M."/>
            <person name="Tiedje J.M."/>
        </authorList>
    </citation>
    <scope>NUCLEOTIDE SEQUENCE [LARGE SCALE GENOMIC DNA]</scope>
    <source>
        <strain>DSM 17307 / VKM B-2377 / 273-4</strain>
    </source>
</reference>
<proteinExistence type="inferred from homology"/>
<accession>Q4FTK5</accession>
<evidence type="ECO:0000255" key="1">
    <source>
        <dbReference type="HAMAP-Rule" id="MF_01866"/>
    </source>
</evidence>
<feature type="chain" id="PRO_0000375343" description="YcgL domain-containing protein Psyc_0800">
    <location>
        <begin position="1"/>
        <end position="107"/>
    </location>
</feature>
<feature type="domain" description="YcgL" evidence="1">
    <location>
        <begin position="1"/>
        <end position="95"/>
    </location>
</feature>
<protein>
    <recommendedName>
        <fullName evidence="1">YcgL domain-containing protein Psyc_0800</fullName>
    </recommendedName>
</protein>
<dbReference type="EMBL" id="CP000082">
    <property type="protein sequence ID" value="AAZ18653.1"/>
    <property type="molecule type" value="Genomic_DNA"/>
</dbReference>
<dbReference type="RefSeq" id="WP_011280080.1">
    <property type="nucleotide sequence ID" value="NC_007204.1"/>
</dbReference>
<dbReference type="SMR" id="Q4FTK5"/>
<dbReference type="STRING" id="259536.Psyc_0800"/>
<dbReference type="KEGG" id="par:Psyc_0800"/>
<dbReference type="eggNOG" id="COG3100">
    <property type="taxonomic scope" value="Bacteria"/>
</dbReference>
<dbReference type="HOGENOM" id="CLU_155118_0_1_6"/>
<dbReference type="OrthoDB" id="7062382at2"/>
<dbReference type="Proteomes" id="UP000000546">
    <property type="component" value="Chromosome"/>
</dbReference>
<dbReference type="Gene3D" id="3.10.510.20">
    <property type="entry name" value="YcgL domain"/>
    <property type="match status" value="1"/>
</dbReference>
<dbReference type="HAMAP" id="MF_01866">
    <property type="entry name" value="UPF0745"/>
    <property type="match status" value="1"/>
</dbReference>
<dbReference type="InterPro" id="IPR038068">
    <property type="entry name" value="YcgL-like_sf"/>
</dbReference>
<dbReference type="InterPro" id="IPR027354">
    <property type="entry name" value="YcgL_dom"/>
</dbReference>
<dbReference type="PANTHER" id="PTHR38109">
    <property type="entry name" value="PROTEIN YCGL"/>
    <property type="match status" value="1"/>
</dbReference>
<dbReference type="PANTHER" id="PTHR38109:SF1">
    <property type="entry name" value="PROTEIN YCGL"/>
    <property type="match status" value="1"/>
</dbReference>
<dbReference type="Pfam" id="PF05166">
    <property type="entry name" value="YcgL"/>
    <property type="match status" value="1"/>
</dbReference>
<dbReference type="SUPFAM" id="SSF160191">
    <property type="entry name" value="YcgL-like"/>
    <property type="match status" value="1"/>
</dbReference>
<dbReference type="PROSITE" id="PS51648">
    <property type="entry name" value="YCGL"/>
    <property type="match status" value="1"/>
</dbReference>